<name>PNP_STAAT</name>
<accession>A8Z3V4</accession>
<feature type="chain" id="PRO_1000088001" description="Polyribonucleotide nucleotidyltransferase">
    <location>
        <begin position="1"/>
        <end position="698"/>
    </location>
</feature>
<feature type="domain" description="KH" evidence="1">
    <location>
        <begin position="557"/>
        <end position="616"/>
    </location>
</feature>
<feature type="domain" description="S1 motif" evidence="1">
    <location>
        <begin position="626"/>
        <end position="694"/>
    </location>
</feature>
<feature type="binding site" evidence="1">
    <location>
        <position position="490"/>
    </location>
    <ligand>
        <name>Mg(2+)</name>
        <dbReference type="ChEBI" id="CHEBI:18420"/>
    </ligand>
</feature>
<feature type="binding site" evidence="1">
    <location>
        <position position="496"/>
    </location>
    <ligand>
        <name>Mg(2+)</name>
        <dbReference type="ChEBI" id="CHEBI:18420"/>
    </ligand>
</feature>
<gene>
    <name evidence="1" type="primary">pnp</name>
    <name type="ordered locus">USA300HOU_1206</name>
</gene>
<organism>
    <name type="scientific">Staphylococcus aureus (strain USA300 / TCH1516)</name>
    <dbReference type="NCBI Taxonomy" id="451516"/>
    <lineage>
        <taxon>Bacteria</taxon>
        <taxon>Bacillati</taxon>
        <taxon>Bacillota</taxon>
        <taxon>Bacilli</taxon>
        <taxon>Bacillales</taxon>
        <taxon>Staphylococcaceae</taxon>
        <taxon>Staphylococcus</taxon>
    </lineage>
</organism>
<proteinExistence type="inferred from homology"/>
<keyword id="KW-0963">Cytoplasm</keyword>
<keyword id="KW-0460">Magnesium</keyword>
<keyword id="KW-0479">Metal-binding</keyword>
<keyword id="KW-0548">Nucleotidyltransferase</keyword>
<keyword id="KW-0694">RNA-binding</keyword>
<keyword id="KW-0808">Transferase</keyword>
<sequence>MSQEKKVFKTEWAGRSLTIETGQLAKQANGAVLVRYGDTVVLSTATASKEPRDGDFFPLTVNYEEKMYAAGKIPGGFKKREGRPGDDATLTARLIDRPIRPLFPKGYKHDVQIMNMVLSADPDCSPQMAAMIGSSMALSVSDIPFQGPIAGVNVGYIDGKYIINPTVEEKEVSRLDLEVAGHKDAVNMVEAGASEITEQEMLEAIFFGHEEIQRLVDFQQQIVDHIQPVKQEFIPAERDEALVERVKSLTEEKGLKETVLTFDKQQRDENLDNLKEEIVNEFIDEEDPENELLIKEVYAILNELVKEEVRRLIADEKIRPDGRKPDEIRPLDSEVGILPRTHGSGLFTRGQTQALSVLTLGALGDYQLIDGLGPEEEKRFMHHYNFPNFSVGETGPVRAPGRREIGHGALGERALKYIIPDTADFPYTIRIVSEVLESNGSSSQASICGSTLALMDAGVPIKAPVAGIAMGLVTREDSYTILTDIQGMEDALGDMDFKVAGTKEGITAIQMDIKIDGLTREIIEEALEQARRGRLEIMNHMLQTIDQPRTELSAYAPKVVTMTIKPDKIRDVIGPGGKKINEIIDETGVKLDIEQDGTIFIGAVDQAMINRAREIIEEITREAEVGQTYQATVKRIEKYGAFVGLFPGKDALLHISQISKNRIEKVEDVLKIGDTIEVKITEIDKQGRVNASHRALEE</sequence>
<comment type="function">
    <text evidence="1">Involved in mRNA degradation. Catalyzes the phosphorolysis of single-stranded polyribonucleotides processively in the 3'- to 5'-direction.</text>
</comment>
<comment type="catalytic activity">
    <reaction evidence="1">
        <text>RNA(n+1) + phosphate = RNA(n) + a ribonucleoside 5'-diphosphate</text>
        <dbReference type="Rhea" id="RHEA:22096"/>
        <dbReference type="Rhea" id="RHEA-COMP:14527"/>
        <dbReference type="Rhea" id="RHEA-COMP:17342"/>
        <dbReference type="ChEBI" id="CHEBI:43474"/>
        <dbReference type="ChEBI" id="CHEBI:57930"/>
        <dbReference type="ChEBI" id="CHEBI:140395"/>
        <dbReference type="EC" id="2.7.7.8"/>
    </reaction>
</comment>
<comment type="cofactor">
    <cofactor evidence="1">
        <name>Mg(2+)</name>
        <dbReference type="ChEBI" id="CHEBI:18420"/>
    </cofactor>
</comment>
<comment type="subcellular location">
    <subcellularLocation>
        <location evidence="1">Cytoplasm</location>
    </subcellularLocation>
</comment>
<comment type="similarity">
    <text evidence="1">Belongs to the polyribonucleotide nucleotidyltransferase family.</text>
</comment>
<protein>
    <recommendedName>
        <fullName evidence="1">Polyribonucleotide nucleotidyltransferase</fullName>
        <ecNumber evidence="1">2.7.7.8</ecNumber>
    </recommendedName>
    <alternativeName>
        <fullName evidence="1">Polynucleotide phosphorylase</fullName>
        <shortName evidence="1">PNPase</shortName>
    </alternativeName>
</protein>
<dbReference type="EC" id="2.7.7.8" evidence="1"/>
<dbReference type="EMBL" id="CP000730">
    <property type="protein sequence ID" value="ABX29220.1"/>
    <property type="molecule type" value="Genomic_DNA"/>
</dbReference>
<dbReference type="RefSeq" id="WP_000076690.1">
    <property type="nucleotide sequence ID" value="NC_010079.1"/>
</dbReference>
<dbReference type="SMR" id="A8Z3V4"/>
<dbReference type="KEGG" id="sax:USA300HOU_1206"/>
<dbReference type="HOGENOM" id="CLU_004217_2_2_9"/>
<dbReference type="GO" id="GO:0005829">
    <property type="term" value="C:cytosol"/>
    <property type="evidence" value="ECO:0007669"/>
    <property type="project" value="TreeGrafter"/>
</dbReference>
<dbReference type="GO" id="GO:0000175">
    <property type="term" value="F:3'-5'-RNA exonuclease activity"/>
    <property type="evidence" value="ECO:0007669"/>
    <property type="project" value="TreeGrafter"/>
</dbReference>
<dbReference type="GO" id="GO:0000287">
    <property type="term" value="F:magnesium ion binding"/>
    <property type="evidence" value="ECO:0007669"/>
    <property type="project" value="UniProtKB-UniRule"/>
</dbReference>
<dbReference type="GO" id="GO:0004654">
    <property type="term" value="F:polyribonucleotide nucleotidyltransferase activity"/>
    <property type="evidence" value="ECO:0007669"/>
    <property type="project" value="UniProtKB-UniRule"/>
</dbReference>
<dbReference type="GO" id="GO:0003723">
    <property type="term" value="F:RNA binding"/>
    <property type="evidence" value="ECO:0007669"/>
    <property type="project" value="UniProtKB-UniRule"/>
</dbReference>
<dbReference type="GO" id="GO:0006402">
    <property type="term" value="P:mRNA catabolic process"/>
    <property type="evidence" value="ECO:0007669"/>
    <property type="project" value="UniProtKB-UniRule"/>
</dbReference>
<dbReference type="GO" id="GO:0006396">
    <property type="term" value="P:RNA processing"/>
    <property type="evidence" value="ECO:0007669"/>
    <property type="project" value="InterPro"/>
</dbReference>
<dbReference type="CDD" id="cd02393">
    <property type="entry name" value="KH-I_PNPase"/>
    <property type="match status" value="1"/>
</dbReference>
<dbReference type="CDD" id="cd11363">
    <property type="entry name" value="RNase_PH_PNPase_1"/>
    <property type="match status" value="1"/>
</dbReference>
<dbReference type="CDD" id="cd11364">
    <property type="entry name" value="RNase_PH_PNPase_2"/>
    <property type="match status" value="1"/>
</dbReference>
<dbReference type="CDD" id="cd04472">
    <property type="entry name" value="S1_PNPase"/>
    <property type="match status" value="1"/>
</dbReference>
<dbReference type="FunFam" id="2.40.50.140:FF:000023">
    <property type="entry name" value="Polyribonucleotide nucleotidyltransferase"/>
    <property type="match status" value="1"/>
</dbReference>
<dbReference type="FunFam" id="3.30.1370.10:FF:000001">
    <property type="entry name" value="Polyribonucleotide nucleotidyltransferase"/>
    <property type="match status" value="1"/>
</dbReference>
<dbReference type="FunFam" id="3.30.230.70:FF:000001">
    <property type="entry name" value="Polyribonucleotide nucleotidyltransferase"/>
    <property type="match status" value="1"/>
</dbReference>
<dbReference type="FunFam" id="3.30.230.70:FF:000002">
    <property type="entry name" value="Polyribonucleotide nucleotidyltransferase"/>
    <property type="match status" value="1"/>
</dbReference>
<dbReference type="Gene3D" id="3.30.230.70">
    <property type="entry name" value="GHMP Kinase, N-terminal domain"/>
    <property type="match status" value="2"/>
</dbReference>
<dbReference type="Gene3D" id="3.30.1370.10">
    <property type="entry name" value="K Homology domain, type 1"/>
    <property type="match status" value="1"/>
</dbReference>
<dbReference type="Gene3D" id="2.40.50.140">
    <property type="entry name" value="Nucleic acid-binding proteins"/>
    <property type="match status" value="1"/>
</dbReference>
<dbReference type="HAMAP" id="MF_01595">
    <property type="entry name" value="PNPase"/>
    <property type="match status" value="1"/>
</dbReference>
<dbReference type="InterPro" id="IPR001247">
    <property type="entry name" value="ExoRNase_PH_dom1"/>
</dbReference>
<dbReference type="InterPro" id="IPR015847">
    <property type="entry name" value="ExoRNase_PH_dom2"/>
</dbReference>
<dbReference type="InterPro" id="IPR036345">
    <property type="entry name" value="ExoRNase_PH_dom2_sf"/>
</dbReference>
<dbReference type="InterPro" id="IPR004087">
    <property type="entry name" value="KH_dom"/>
</dbReference>
<dbReference type="InterPro" id="IPR004088">
    <property type="entry name" value="KH_dom_type_1"/>
</dbReference>
<dbReference type="InterPro" id="IPR036612">
    <property type="entry name" value="KH_dom_type_1_sf"/>
</dbReference>
<dbReference type="InterPro" id="IPR012340">
    <property type="entry name" value="NA-bd_OB-fold"/>
</dbReference>
<dbReference type="InterPro" id="IPR012162">
    <property type="entry name" value="PNPase"/>
</dbReference>
<dbReference type="InterPro" id="IPR027408">
    <property type="entry name" value="PNPase/RNase_PH_dom_sf"/>
</dbReference>
<dbReference type="InterPro" id="IPR015848">
    <property type="entry name" value="PNPase_PH_RNA-bd_bac/org-type"/>
</dbReference>
<dbReference type="InterPro" id="IPR036456">
    <property type="entry name" value="PNPase_PH_RNA-bd_sf"/>
</dbReference>
<dbReference type="InterPro" id="IPR020568">
    <property type="entry name" value="Ribosomal_Su5_D2-typ_SF"/>
</dbReference>
<dbReference type="InterPro" id="IPR003029">
    <property type="entry name" value="S1_domain"/>
</dbReference>
<dbReference type="NCBIfam" id="TIGR03591">
    <property type="entry name" value="polynuc_phos"/>
    <property type="match status" value="1"/>
</dbReference>
<dbReference type="NCBIfam" id="NF008805">
    <property type="entry name" value="PRK11824.1"/>
    <property type="match status" value="1"/>
</dbReference>
<dbReference type="PANTHER" id="PTHR11252">
    <property type="entry name" value="POLYRIBONUCLEOTIDE NUCLEOTIDYLTRANSFERASE"/>
    <property type="match status" value="1"/>
</dbReference>
<dbReference type="PANTHER" id="PTHR11252:SF0">
    <property type="entry name" value="POLYRIBONUCLEOTIDE NUCLEOTIDYLTRANSFERASE 1, MITOCHONDRIAL"/>
    <property type="match status" value="1"/>
</dbReference>
<dbReference type="Pfam" id="PF00013">
    <property type="entry name" value="KH_1"/>
    <property type="match status" value="1"/>
</dbReference>
<dbReference type="Pfam" id="PF03726">
    <property type="entry name" value="PNPase"/>
    <property type="match status" value="1"/>
</dbReference>
<dbReference type="Pfam" id="PF01138">
    <property type="entry name" value="RNase_PH"/>
    <property type="match status" value="2"/>
</dbReference>
<dbReference type="Pfam" id="PF03725">
    <property type="entry name" value="RNase_PH_C"/>
    <property type="match status" value="2"/>
</dbReference>
<dbReference type="Pfam" id="PF00575">
    <property type="entry name" value="S1"/>
    <property type="match status" value="1"/>
</dbReference>
<dbReference type="PIRSF" id="PIRSF005499">
    <property type="entry name" value="PNPase"/>
    <property type="match status" value="1"/>
</dbReference>
<dbReference type="SMART" id="SM00322">
    <property type="entry name" value="KH"/>
    <property type="match status" value="1"/>
</dbReference>
<dbReference type="SMART" id="SM00316">
    <property type="entry name" value="S1"/>
    <property type="match status" value="1"/>
</dbReference>
<dbReference type="SUPFAM" id="SSF54791">
    <property type="entry name" value="Eukaryotic type KH-domain (KH-domain type I)"/>
    <property type="match status" value="1"/>
</dbReference>
<dbReference type="SUPFAM" id="SSF50249">
    <property type="entry name" value="Nucleic acid-binding proteins"/>
    <property type="match status" value="1"/>
</dbReference>
<dbReference type="SUPFAM" id="SSF46915">
    <property type="entry name" value="Polynucleotide phosphorylase/guanosine pentaphosphate synthase (PNPase/GPSI), domain 3"/>
    <property type="match status" value="1"/>
</dbReference>
<dbReference type="SUPFAM" id="SSF55666">
    <property type="entry name" value="Ribonuclease PH domain 2-like"/>
    <property type="match status" value="2"/>
</dbReference>
<dbReference type="SUPFAM" id="SSF54211">
    <property type="entry name" value="Ribosomal protein S5 domain 2-like"/>
    <property type="match status" value="2"/>
</dbReference>
<dbReference type="PROSITE" id="PS50084">
    <property type="entry name" value="KH_TYPE_1"/>
    <property type="match status" value="1"/>
</dbReference>
<dbReference type="PROSITE" id="PS50126">
    <property type="entry name" value="S1"/>
    <property type="match status" value="1"/>
</dbReference>
<evidence type="ECO:0000255" key="1">
    <source>
        <dbReference type="HAMAP-Rule" id="MF_01595"/>
    </source>
</evidence>
<reference key="1">
    <citation type="journal article" date="2007" name="BMC Microbiol.">
        <title>Subtle genetic changes enhance virulence of methicillin resistant and sensitive Staphylococcus aureus.</title>
        <authorList>
            <person name="Highlander S.K."/>
            <person name="Hulten K.G."/>
            <person name="Qin X."/>
            <person name="Jiang H."/>
            <person name="Yerrapragada S."/>
            <person name="Mason E.O. Jr."/>
            <person name="Shang Y."/>
            <person name="Williams T.M."/>
            <person name="Fortunov R.M."/>
            <person name="Liu Y."/>
            <person name="Igboeli O."/>
            <person name="Petrosino J."/>
            <person name="Tirumalai M."/>
            <person name="Uzman A."/>
            <person name="Fox G.E."/>
            <person name="Cardenas A.M."/>
            <person name="Muzny D.M."/>
            <person name="Hemphill L."/>
            <person name="Ding Y."/>
            <person name="Dugan S."/>
            <person name="Blyth P.R."/>
            <person name="Buhay C.J."/>
            <person name="Dinh H.H."/>
            <person name="Hawes A.C."/>
            <person name="Holder M."/>
            <person name="Kovar C.L."/>
            <person name="Lee S.L."/>
            <person name="Liu W."/>
            <person name="Nazareth L.V."/>
            <person name="Wang Q."/>
            <person name="Zhou J."/>
            <person name="Kaplan S.L."/>
            <person name="Weinstock G.M."/>
        </authorList>
    </citation>
    <scope>NUCLEOTIDE SEQUENCE [LARGE SCALE GENOMIC DNA]</scope>
    <source>
        <strain>USA300 / TCH1516</strain>
    </source>
</reference>